<comment type="function">
    <text evidence="1">This is one of the proteins that binds to the 5S RNA in the ribosome where it forms part of the central protuberance.</text>
</comment>
<comment type="subunit">
    <text evidence="1">Part of the 50S ribosomal subunit; part of the 5S rRNA/L5/L18/L25 subcomplex. Contacts the 5S rRNA. Binds to the 5S rRNA independently of L5 and L18.</text>
</comment>
<comment type="similarity">
    <text evidence="1">Belongs to the bacterial ribosomal protein bL25 family. CTC subfamily.</text>
</comment>
<name>RL25_XYLFA</name>
<dbReference type="EMBL" id="AE003849">
    <property type="protein sequence ID" value="AAF85440.1"/>
    <property type="molecule type" value="Genomic_DNA"/>
</dbReference>
<dbReference type="PIR" id="D82532">
    <property type="entry name" value="D82532"/>
</dbReference>
<dbReference type="RefSeq" id="WP_010895057.1">
    <property type="nucleotide sequence ID" value="NC_002488.3"/>
</dbReference>
<dbReference type="SMR" id="Q9PA77"/>
<dbReference type="STRING" id="160492.XF_2643"/>
<dbReference type="KEGG" id="xfa:XF_2643"/>
<dbReference type="eggNOG" id="COG1825">
    <property type="taxonomic scope" value="Bacteria"/>
</dbReference>
<dbReference type="HOGENOM" id="CLU_075939_0_1_6"/>
<dbReference type="Proteomes" id="UP000000812">
    <property type="component" value="Chromosome"/>
</dbReference>
<dbReference type="GO" id="GO:0022625">
    <property type="term" value="C:cytosolic large ribosomal subunit"/>
    <property type="evidence" value="ECO:0007669"/>
    <property type="project" value="TreeGrafter"/>
</dbReference>
<dbReference type="GO" id="GO:0008097">
    <property type="term" value="F:5S rRNA binding"/>
    <property type="evidence" value="ECO:0007669"/>
    <property type="project" value="InterPro"/>
</dbReference>
<dbReference type="GO" id="GO:0003735">
    <property type="term" value="F:structural constituent of ribosome"/>
    <property type="evidence" value="ECO:0007669"/>
    <property type="project" value="InterPro"/>
</dbReference>
<dbReference type="GO" id="GO:0006412">
    <property type="term" value="P:translation"/>
    <property type="evidence" value="ECO:0007669"/>
    <property type="project" value="UniProtKB-UniRule"/>
</dbReference>
<dbReference type="CDD" id="cd00495">
    <property type="entry name" value="Ribosomal_L25_TL5_CTC"/>
    <property type="match status" value="1"/>
</dbReference>
<dbReference type="FunFam" id="2.40.240.10:FF:000002">
    <property type="entry name" value="50S ribosomal protein L25"/>
    <property type="match status" value="1"/>
</dbReference>
<dbReference type="Gene3D" id="2.170.120.20">
    <property type="entry name" value="Ribosomal protein L25, beta domain"/>
    <property type="match status" value="1"/>
</dbReference>
<dbReference type="Gene3D" id="2.40.240.10">
    <property type="entry name" value="Ribosomal Protein L25, Chain P"/>
    <property type="match status" value="1"/>
</dbReference>
<dbReference type="HAMAP" id="MF_01336">
    <property type="entry name" value="Ribosomal_bL25"/>
    <property type="match status" value="1"/>
</dbReference>
<dbReference type="HAMAP" id="MF_01334">
    <property type="entry name" value="Ribosomal_bL25_CTC"/>
    <property type="match status" value="1"/>
</dbReference>
<dbReference type="InterPro" id="IPR020056">
    <property type="entry name" value="Rbsml_bL25/Gln-tRNA_synth_N"/>
</dbReference>
<dbReference type="InterPro" id="IPR011035">
    <property type="entry name" value="Ribosomal_bL25/Gln-tRNA_synth"/>
</dbReference>
<dbReference type="InterPro" id="IPR020057">
    <property type="entry name" value="Ribosomal_bL25_b-dom"/>
</dbReference>
<dbReference type="InterPro" id="IPR037121">
    <property type="entry name" value="Ribosomal_bL25_C"/>
</dbReference>
<dbReference type="InterPro" id="IPR001021">
    <property type="entry name" value="Ribosomal_bL25_long"/>
</dbReference>
<dbReference type="InterPro" id="IPR020055">
    <property type="entry name" value="Ribosomal_bL25_short"/>
</dbReference>
<dbReference type="InterPro" id="IPR029751">
    <property type="entry name" value="Ribosomal_L25_dom"/>
</dbReference>
<dbReference type="InterPro" id="IPR020930">
    <property type="entry name" value="Ribosomal_uL5_bac-type"/>
</dbReference>
<dbReference type="NCBIfam" id="TIGR00731">
    <property type="entry name" value="bL25_bact_ctc"/>
    <property type="match status" value="1"/>
</dbReference>
<dbReference type="NCBIfam" id="NF004128">
    <property type="entry name" value="PRK05618.1-2"/>
    <property type="match status" value="1"/>
</dbReference>
<dbReference type="NCBIfam" id="NF004130">
    <property type="entry name" value="PRK05618.1-5"/>
    <property type="match status" value="1"/>
</dbReference>
<dbReference type="NCBIfam" id="NF004612">
    <property type="entry name" value="PRK05943.1"/>
    <property type="match status" value="1"/>
</dbReference>
<dbReference type="PANTHER" id="PTHR33284">
    <property type="entry name" value="RIBOSOMAL PROTEIN L25/GLN-TRNA SYNTHETASE, ANTI-CODON-BINDING DOMAIN-CONTAINING PROTEIN"/>
    <property type="match status" value="1"/>
</dbReference>
<dbReference type="PANTHER" id="PTHR33284:SF1">
    <property type="entry name" value="RIBOSOMAL PROTEIN L25_GLN-TRNA SYNTHETASE, ANTI-CODON-BINDING DOMAIN-CONTAINING PROTEIN"/>
    <property type="match status" value="1"/>
</dbReference>
<dbReference type="Pfam" id="PF01386">
    <property type="entry name" value="Ribosomal_L25p"/>
    <property type="match status" value="1"/>
</dbReference>
<dbReference type="Pfam" id="PF14693">
    <property type="entry name" value="Ribosomal_TL5_C"/>
    <property type="match status" value="1"/>
</dbReference>
<dbReference type="SUPFAM" id="SSF50715">
    <property type="entry name" value="Ribosomal protein L25-like"/>
    <property type="match status" value="1"/>
</dbReference>
<accession>Q9PA77</accession>
<evidence type="ECO:0000255" key="1">
    <source>
        <dbReference type="HAMAP-Rule" id="MF_01334"/>
    </source>
</evidence>
<evidence type="ECO:0000256" key="2">
    <source>
        <dbReference type="SAM" id="MobiDB-lite"/>
    </source>
</evidence>
<evidence type="ECO:0000305" key="3"/>
<proteinExistence type="inferred from homology"/>
<gene>
    <name evidence="1" type="primary">rplY</name>
    <name evidence="1" type="synonym">ctc</name>
    <name type="ordered locus">XF_2643</name>
</gene>
<sequence>MANHQIKAQRRKDEGKGASRRLRHAGMIPAIIYGGEQRPVSIQLNHEQIWLAQQNEWFYSSILDLNVDGGGGEKVLLRDLQRHPYRQLVMHVDFQRVSSDAKLSVAVPLHFINQATSPAGKASGVVITHELNEVHVSCLPKDLPEFIEVDLSTLSVGHVIHLSDITFPIGVELSTRLDKEHDMAVVIAKHVVIEDDTPAEEEGEGDTK</sequence>
<keyword id="KW-0687">Ribonucleoprotein</keyword>
<keyword id="KW-0689">Ribosomal protein</keyword>
<keyword id="KW-0694">RNA-binding</keyword>
<keyword id="KW-0699">rRNA-binding</keyword>
<protein>
    <recommendedName>
        <fullName evidence="1">Large ribosomal subunit protein bL25</fullName>
    </recommendedName>
    <alternativeName>
        <fullName evidence="3">50S ribosomal protein L25</fullName>
    </alternativeName>
    <alternativeName>
        <fullName evidence="1">General stress protein CTC</fullName>
    </alternativeName>
</protein>
<organism>
    <name type="scientific">Xylella fastidiosa (strain 9a5c)</name>
    <dbReference type="NCBI Taxonomy" id="160492"/>
    <lineage>
        <taxon>Bacteria</taxon>
        <taxon>Pseudomonadati</taxon>
        <taxon>Pseudomonadota</taxon>
        <taxon>Gammaproteobacteria</taxon>
        <taxon>Lysobacterales</taxon>
        <taxon>Lysobacteraceae</taxon>
        <taxon>Xylella</taxon>
    </lineage>
</organism>
<feature type="chain" id="PRO_0000181621" description="Large ribosomal subunit protein bL25">
    <location>
        <begin position="1"/>
        <end position="208"/>
    </location>
</feature>
<feature type="region of interest" description="Disordered" evidence="2">
    <location>
        <begin position="1"/>
        <end position="20"/>
    </location>
</feature>
<reference key="1">
    <citation type="journal article" date="2000" name="Nature">
        <title>The genome sequence of the plant pathogen Xylella fastidiosa.</title>
        <authorList>
            <person name="Simpson A.J.G."/>
            <person name="Reinach F.C."/>
            <person name="Arruda P."/>
            <person name="Abreu F.A."/>
            <person name="Acencio M."/>
            <person name="Alvarenga R."/>
            <person name="Alves L.M.C."/>
            <person name="Araya J.E."/>
            <person name="Baia G.S."/>
            <person name="Baptista C.S."/>
            <person name="Barros M.H."/>
            <person name="Bonaccorsi E.D."/>
            <person name="Bordin S."/>
            <person name="Bove J.M."/>
            <person name="Briones M.R.S."/>
            <person name="Bueno M.R.P."/>
            <person name="Camargo A.A."/>
            <person name="Camargo L.E.A."/>
            <person name="Carraro D.M."/>
            <person name="Carrer H."/>
            <person name="Colauto N.B."/>
            <person name="Colombo C."/>
            <person name="Costa F.F."/>
            <person name="Costa M.C.R."/>
            <person name="Costa-Neto C.M."/>
            <person name="Coutinho L.L."/>
            <person name="Cristofani M."/>
            <person name="Dias-Neto E."/>
            <person name="Docena C."/>
            <person name="El-Dorry H."/>
            <person name="Facincani A.P."/>
            <person name="Ferreira A.J.S."/>
            <person name="Ferreira V.C.A."/>
            <person name="Ferro J.A."/>
            <person name="Fraga J.S."/>
            <person name="Franca S.C."/>
            <person name="Franco M.C."/>
            <person name="Frohme M."/>
            <person name="Furlan L.R."/>
            <person name="Garnier M."/>
            <person name="Goldman G.H."/>
            <person name="Goldman M.H.S."/>
            <person name="Gomes S.L."/>
            <person name="Gruber A."/>
            <person name="Ho P.L."/>
            <person name="Hoheisel J.D."/>
            <person name="Junqueira M.L."/>
            <person name="Kemper E.L."/>
            <person name="Kitajima J.P."/>
            <person name="Krieger J.E."/>
            <person name="Kuramae E.E."/>
            <person name="Laigret F."/>
            <person name="Lambais M.R."/>
            <person name="Leite L.C.C."/>
            <person name="Lemos E.G.M."/>
            <person name="Lemos M.V.F."/>
            <person name="Lopes S.A."/>
            <person name="Lopes C.R."/>
            <person name="Machado J.A."/>
            <person name="Machado M.A."/>
            <person name="Madeira A.M.B.N."/>
            <person name="Madeira H.M.F."/>
            <person name="Marino C.L."/>
            <person name="Marques M.V."/>
            <person name="Martins E.A.L."/>
            <person name="Martins E.M.F."/>
            <person name="Matsukuma A.Y."/>
            <person name="Menck C.F.M."/>
            <person name="Miracca E.C."/>
            <person name="Miyaki C.Y."/>
            <person name="Monteiro-Vitorello C.B."/>
            <person name="Moon D.H."/>
            <person name="Nagai M.A."/>
            <person name="Nascimento A.L.T.O."/>
            <person name="Netto L.E.S."/>
            <person name="Nhani A. Jr."/>
            <person name="Nobrega F.G."/>
            <person name="Nunes L.R."/>
            <person name="Oliveira M.A."/>
            <person name="de Oliveira M.C."/>
            <person name="de Oliveira R.C."/>
            <person name="Palmieri D.A."/>
            <person name="Paris A."/>
            <person name="Peixoto B.R."/>
            <person name="Pereira G.A.G."/>
            <person name="Pereira H.A. Jr."/>
            <person name="Pesquero J.B."/>
            <person name="Quaggio R.B."/>
            <person name="Roberto P.G."/>
            <person name="Rodrigues V."/>
            <person name="de Rosa A.J.M."/>
            <person name="de Rosa V.E. Jr."/>
            <person name="de Sa R.G."/>
            <person name="Santelli R.V."/>
            <person name="Sawasaki H.E."/>
            <person name="da Silva A.C.R."/>
            <person name="da Silva A.M."/>
            <person name="da Silva F.R."/>
            <person name="Silva W.A. Jr."/>
            <person name="da Silveira J.F."/>
            <person name="Silvestri M.L.Z."/>
            <person name="Siqueira W.J."/>
            <person name="de Souza A.A."/>
            <person name="de Souza A.P."/>
            <person name="Terenzi M.F."/>
            <person name="Truffi D."/>
            <person name="Tsai S.M."/>
            <person name="Tsuhako M.H."/>
            <person name="Vallada H."/>
            <person name="Van Sluys M.A."/>
            <person name="Verjovski-Almeida S."/>
            <person name="Vettore A.L."/>
            <person name="Zago M.A."/>
            <person name="Zatz M."/>
            <person name="Meidanis J."/>
            <person name="Setubal J.C."/>
        </authorList>
    </citation>
    <scope>NUCLEOTIDE SEQUENCE [LARGE SCALE GENOMIC DNA]</scope>
    <source>
        <strain>9a5c</strain>
    </source>
</reference>